<accession>Q3SWX9</accession>
<protein>
    <recommendedName>
        <fullName>Double-strand-break repair protein rad21 homolog</fullName>
    </recommendedName>
    <component>
        <recommendedName>
            <fullName>64-kDa C-terminal product</fullName>
        </recommendedName>
        <alternativeName>
            <fullName evidence="2">64-kDa carboxy-terminal product</fullName>
        </alternativeName>
    </component>
</protein>
<feature type="chain" id="PRO_0000245487" description="Double-strand-break repair protein rad21 homolog">
    <location>
        <begin position="1"/>
        <end position="630"/>
    </location>
</feature>
<feature type="chain" id="PRO_0000446316" description="64-kDa C-terminal product" evidence="2">
    <location>
        <begin position="280"/>
        <end position="630"/>
    </location>
</feature>
<feature type="region of interest" description="Required for interaction with SMARCA5" evidence="2">
    <location>
        <begin position="126"/>
        <end position="282"/>
    </location>
</feature>
<feature type="region of interest" description="Interaction with NIPBL" evidence="2">
    <location>
        <begin position="154"/>
        <end position="171"/>
    </location>
</feature>
<feature type="region of interest" description="Disordered" evidence="7">
    <location>
        <begin position="258"/>
        <end position="285"/>
    </location>
</feature>
<feature type="region of interest" description="Interaction with WAPL and PDS5B" evidence="1">
    <location>
        <begin position="287"/>
        <end position="403"/>
    </location>
</feature>
<feature type="region of interest" description="Interaction with STAG1" evidence="1">
    <location>
        <begin position="362"/>
        <end position="403"/>
    </location>
</feature>
<feature type="region of interest" description="Disordered" evidence="7">
    <location>
        <begin position="423"/>
        <end position="488"/>
    </location>
</feature>
<feature type="region of interest" description="Disordered" evidence="7">
    <location>
        <begin position="516"/>
        <end position="557"/>
    </location>
</feature>
<feature type="compositionally biased region" description="Low complexity" evidence="7">
    <location>
        <begin position="271"/>
        <end position="285"/>
    </location>
</feature>
<feature type="compositionally biased region" description="Basic and acidic residues" evidence="7">
    <location>
        <begin position="423"/>
        <end position="440"/>
    </location>
</feature>
<feature type="compositionally biased region" description="Polar residues" evidence="7">
    <location>
        <begin position="451"/>
        <end position="460"/>
    </location>
</feature>
<feature type="compositionally biased region" description="Basic and acidic residues" evidence="7">
    <location>
        <begin position="521"/>
        <end position="531"/>
    </location>
</feature>
<feature type="compositionally biased region" description="Acidic residues" evidence="7">
    <location>
        <begin position="532"/>
        <end position="550"/>
    </location>
</feature>
<feature type="site" description="Cleavage; by ESPL1" evidence="1">
    <location>
        <begin position="172"/>
        <end position="173"/>
    </location>
</feature>
<feature type="site" description="Cleavage; by caspase-3 or caspase-7" evidence="1">
    <location>
        <begin position="279"/>
        <end position="280"/>
    </location>
</feature>
<feature type="site" description="Cleavage; by ESPL1" evidence="1">
    <location>
        <begin position="450"/>
        <end position="451"/>
    </location>
</feature>
<feature type="modified residue" description="Phosphoserine" evidence="2">
    <location>
        <position position="46"/>
    </location>
</feature>
<feature type="modified residue" description="Phosphoserine" evidence="2">
    <location>
        <position position="153"/>
    </location>
</feature>
<feature type="modified residue" description="Phosphoserine" evidence="2">
    <location>
        <position position="175"/>
    </location>
</feature>
<feature type="modified residue" description="Phosphoserine" evidence="2">
    <location>
        <position position="249"/>
    </location>
</feature>
<feature type="modified residue" description="Phosphothreonine" evidence="2">
    <location>
        <position position="394"/>
    </location>
</feature>
<feature type="modified residue" description="Phosphoserine" evidence="2">
    <location>
        <position position="454"/>
    </location>
</feature>
<feature type="modified residue" description="Phosphoserine" evidence="2">
    <location>
        <position position="544"/>
    </location>
</feature>
<feature type="modified residue" description="Phosphothreonine" evidence="2">
    <location>
        <position position="622"/>
    </location>
</feature>
<feature type="cross-link" description="Glycyl lysine isopeptide (Lys-Gly) (interchain with G-Cter in SUMO2)" evidence="2">
    <location>
        <position position="48"/>
    </location>
</feature>
<feature type="cross-link" description="Glycyl lysine isopeptide (Lys-Gly) (interchain with G-Cter in SUMO2)" evidence="2">
    <location>
        <position position="216"/>
    </location>
</feature>
<feature type="cross-link" description="Glycyl lysine isopeptide (Lys-Gly) (interchain with G-Cter in SUMO2)" evidence="2">
    <location>
        <position position="418"/>
    </location>
</feature>
<keyword id="KW-0053">Apoptosis</keyword>
<keyword id="KW-0131">Cell cycle</keyword>
<keyword id="KW-0132">Cell division</keyword>
<keyword id="KW-0137">Centromere</keyword>
<keyword id="KW-0158">Chromosome</keyword>
<keyword id="KW-0159">Chromosome partition</keyword>
<keyword id="KW-0963">Cytoplasm</keyword>
<keyword id="KW-0206">Cytoskeleton</keyword>
<keyword id="KW-0217">Developmental protein</keyword>
<keyword id="KW-0227">DNA damage</keyword>
<keyword id="KW-0234">DNA repair</keyword>
<keyword id="KW-1017">Isopeptide bond</keyword>
<keyword id="KW-0498">Mitosis</keyword>
<keyword id="KW-0539">Nucleus</keyword>
<keyword id="KW-0597">Phosphoprotein</keyword>
<keyword id="KW-1185">Reference proteome</keyword>
<keyword id="KW-0832">Ubl conjugation</keyword>
<reference key="1">
    <citation type="submission" date="2005-09" db="EMBL/GenBank/DDBJ databases">
        <authorList>
            <consortium name="NIH - Mammalian Gene Collection (MGC) project"/>
        </authorList>
    </citation>
    <scope>NUCLEOTIDE SEQUENCE [LARGE SCALE MRNA]</scope>
    <source>
        <strain>Hereford</strain>
        <tissue>Ascending colon</tissue>
    </source>
</reference>
<organism>
    <name type="scientific">Bos taurus</name>
    <name type="common">Bovine</name>
    <dbReference type="NCBI Taxonomy" id="9913"/>
    <lineage>
        <taxon>Eukaryota</taxon>
        <taxon>Metazoa</taxon>
        <taxon>Chordata</taxon>
        <taxon>Craniata</taxon>
        <taxon>Vertebrata</taxon>
        <taxon>Euteleostomi</taxon>
        <taxon>Mammalia</taxon>
        <taxon>Eutheria</taxon>
        <taxon>Laurasiatheria</taxon>
        <taxon>Artiodactyla</taxon>
        <taxon>Ruminantia</taxon>
        <taxon>Pecora</taxon>
        <taxon>Bovidae</taxon>
        <taxon>Bovinae</taxon>
        <taxon>Bos</taxon>
    </lineage>
</organism>
<name>RAD21_BOVIN</name>
<sequence length="630" mass="71514">MFYAHFVLSKRGPLAKIWLAAHWDKKLTKAHVFECNLESSVESIISPKVKMALRTSGHLLLGVVRIYHRKAKYLLADCNEAFIKIKMAFRPGVVDLPEENREAAYNAITLPEEFHDFDQPLPDLDDIDVAQQFSLNQSRVEEITMREEVGNISILQENDFGDFGMDDREIMREGSAFEDDDMLASTGASNLLLEPEQSTSNLNEKINHLEYEDQYKDDNFGEGNDGGILDDKLISNNDGGIFDDPPALSEAGVMLPEQPAHDDMDEDDNVSMGGPDSPDSVDPVEPMPTMTDQTTLVPNEEEAFALEPIDITVKETKAKRKRKLIVDSVKELDSKTIRAQLSDYSDIVTTLDLAPPTKKLMMWKETGGVEKLFSLPAQPLWNNRLLKLFTRCLTPLVPEDLRKRRKGGEADNLDEFLKEFENPEVPREDQQQQHQQRDVIDEPILEEPSRLQESMETSRTNLDESAMPPPPPQGVKRKAGQIDPEPMIPPQQAEQMEIPPVELPPEEPPNICQLIPELELLPEKEKEKEKEKEDDEEEEDEDASGGDQDQEERRWNKRTQQMLHGLQRALAKTGAESISLLELCRNTNRKQAAAKFYSFLVLKKQQAIELTQEEPYSDIIATPGPRFHII</sequence>
<proteinExistence type="evidence at transcript level"/>
<dbReference type="EMBL" id="BC104612">
    <property type="protein sequence ID" value="AAI04613.1"/>
    <property type="molecule type" value="mRNA"/>
</dbReference>
<dbReference type="RefSeq" id="NP_001029889.1">
    <property type="nucleotide sequence ID" value="NM_001034717.1"/>
</dbReference>
<dbReference type="RefSeq" id="XP_059749317.1">
    <property type="nucleotide sequence ID" value="XM_059893334.1"/>
</dbReference>
<dbReference type="SMR" id="Q3SWX9"/>
<dbReference type="FunCoup" id="Q3SWX9">
    <property type="interactions" value="5067"/>
</dbReference>
<dbReference type="STRING" id="9913.ENSBTAP00000009607"/>
<dbReference type="PaxDb" id="9913-ENSBTAP00000009607"/>
<dbReference type="Ensembl" id="ENSBTAT00000009607.5">
    <property type="protein sequence ID" value="ENSBTAP00000009607.4"/>
    <property type="gene ID" value="ENSBTAG00000007303.6"/>
</dbReference>
<dbReference type="GeneID" id="540966"/>
<dbReference type="KEGG" id="bta:540966"/>
<dbReference type="CTD" id="5885"/>
<dbReference type="VEuPathDB" id="HostDB:ENSBTAG00000007303"/>
<dbReference type="VGNC" id="VGNC:33680">
    <property type="gene designation" value="RAD21"/>
</dbReference>
<dbReference type="eggNOG" id="KOG1213">
    <property type="taxonomic scope" value="Eukaryota"/>
</dbReference>
<dbReference type="GeneTree" id="ENSGT00940000154655"/>
<dbReference type="HOGENOM" id="CLU_015775_1_1_1"/>
<dbReference type="InParanoid" id="Q3SWX9"/>
<dbReference type="OMA" id="HEDYEFP"/>
<dbReference type="OrthoDB" id="10071381at2759"/>
<dbReference type="TreeFam" id="TF101215"/>
<dbReference type="Reactome" id="R-BTA-2467813">
    <property type="pathway name" value="Separation of Sister Chromatids"/>
</dbReference>
<dbReference type="Reactome" id="R-BTA-2468052">
    <property type="pathway name" value="Establishment of Sister Chromatid Cohesion"/>
</dbReference>
<dbReference type="Reactome" id="R-BTA-2470946">
    <property type="pathway name" value="Cohesin Loading onto Chromatin"/>
</dbReference>
<dbReference type="Reactome" id="R-BTA-2500257">
    <property type="pathway name" value="Resolution of Sister Chromatid Cohesion"/>
</dbReference>
<dbReference type="Reactome" id="R-BTA-3108214">
    <property type="pathway name" value="SUMOylation of DNA damage response and repair proteins"/>
</dbReference>
<dbReference type="Proteomes" id="UP000009136">
    <property type="component" value="Chromosome 14"/>
</dbReference>
<dbReference type="Bgee" id="ENSBTAG00000007303">
    <property type="expression patterns" value="Expressed in occipital lobe and 107 other cell types or tissues"/>
</dbReference>
<dbReference type="GO" id="GO:0000785">
    <property type="term" value="C:chromatin"/>
    <property type="evidence" value="ECO:0007669"/>
    <property type="project" value="Ensembl"/>
</dbReference>
<dbReference type="GO" id="GO:0000775">
    <property type="term" value="C:chromosome, centromeric region"/>
    <property type="evidence" value="ECO:0007669"/>
    <property type="project" value="UniProtKB-SubCell"/>
</dbReference>
<dbReference type="GO" id="GO:0000794">
    <property type="term" value="C:condensed nuclear chromosome"/>
    <property type="evidence" value="ECO:0007669"/>
    <property type="project" value="Ensembl"/>
</dbReference>
<dbReference type="GO" id="GO:0005829">
    <property type="term" value="C:cytosol"/>
    <property type="evidence" value="ECO:0007669"/>
    <property type="project" value="UniProtKB-SubCell"/>
</dbReference>
<dbReference type="GO" id="GO:0030893">
    <property type="term" value="C:meiotic cohesin complex"/>
    <property type="evidence" value="ECO:0000318"/>
    <property type="project" value="GO_Central"/>
</dbReference>
<dbReference type="GO" id="GO:0030496">
    <property type="term" value="C:midbody"/>
    <property type="evidence" value="ECO:0007669"/>
    <property type="project" value="Ensembl"/>
</dbReference>
<dbReference type="GO" id="GO:0030892">
    <property type="term" value="C:mitotic cohesin complex"/>
    <property type="evidence" value="ECO:0007669"/>
    <property type="project" value="Ensembl"/>
</dbReference>
<dbReference type="GO" id="GO:0016363">
    <property type="term" value="C:nuclear matrix"/>
    <property type="evidence" value="ECO:0007669"/>
    <property type="project" value="UniProtKB-SubCell"/>
</dbReference>
<dbReference type="GO" id="GO:0005654">
    <property type="term" value="C:nucleoplasm"/>
    <property type="evidence" value="ECO:0007669"/>
    <property type="project" value="Ensembl"/>
</dbReference>
<dbReference type="GO" id="GO:0000922">
    <property type="term" value="C:spindle pole"/>
    <property type="evidence" value="ECO:0007669"/>
    <property type="project" value="UniProtKB-SubCell"/>
</dbReference>
<dbReference type="GO" id="GO:0003682">
    <property type="term" value="F:chromatin binding"/>
    <property type="evidence" value="ECO:0000318"/>
    <property type="project" value="GO_Central"/>
</dbReference>
<dbReference type="GO" id="GO:0000987">
    <property type="term" value="F:cis-regulatory region sequence-specific DNA binding"/>
    <property type="evidence" value="ECO:0007669"/>
    <property type="project" value="Ensembl"/>
</dbReference>
<dbReference type="GO" id="GO:0006915">
    <property type="term" value="P:apoptotic process"/>
    <property type="evidence" value="ECO:0007669"/>
    <property type="project" value="UniProtKB-KW"/>
</dbReference>
<dbReference type="GO" id="GO:0051301">
    <property type="term" value="P:cell division"/>
    <property type="evidence" value="ECO:0007669"/>
    <property type="project" value="UniProtKB-KW"/>
</dbReference>
<dbReference type="GO" id="GO:0140588">
    <property type="term" value="P:chromatin looping"/>
    <property type="evidence" value="ECO:0007669"/>
    <property type="project" value="Ensembl"/>
</dbReference>
<dbReference type="GO" id="GO:0007059">
    <property type="term" value="P:chromosome segregation"/>
    <property type="evidence" value="ECO:0007669"/>
    <property type="project" value="UniProtKB-KW"/>
</dbReference>
<dbReference type="GO" id="GO:0010972">
    <property type="term" value="P:negative regulation of G2/M transition of mitotic cell cycle"/>
    <property type="evidence" value="ECO:0007669"/>
    <property type="project" value="Ensembl"/>
</dbReference>
<dbReference type="GO" id="GO:0045841">
    <property type="term" value="P:negative regulation of mitotic metaphase/anaphase transition"/>
    <property type="evidence" value="ECO:0007669"/>
    <property type="project" value="Ensembl"/>
</dbReference>
<dbReference type="GO" id="GO:0045876">
    <property type="term" value="P:positive regulation of sister chromatid cohesion"/>
    <property type="evidence" value="ECO:0007669"/>
    <property type="project" value="Ensembl"/>
</dbReference>
<dbReference type="GO" id="GO:0071168">
    <property type="term" value="P:protein localization to chromatin"/>
    <property type="evidence" value="ECO:0000250"/>
    <property type="project" value="UniProtKB"/>
</dbReference>
<dbReference type="GO" id="GO:0006357">
    <property type="term" value="P:regulation of transcription by RNA polymerase II"/>
    <property type="evidence" value="ECO:0007669"/>
    <property type="project" value="Ensembl"/>
</dbReference>
<dbReference type="GO" id="GO:1990414">
    <property type="term" value="P:replication-born double-strand break repair via sister chromatid exchange"/>
    <property type="evidence" value="ECO:0000318"/>
    <property type="project" value="GO_Central"/>
</dbReference>
<dbReference type="GO" id="GO:0007062">
    <property type="term" value="P:sister chromatid cohesion"/>
    <property type="evidence" value="ECO:0000318"/>
    <property type="project" value="GO_Central"/>
</dbReference>
<dbReference type="CDD" id="cd21792">
    <property type="entry name" value="Rad21_Rec8_M_NXP1-like"/>
    <property type="match status" value="1"/>
</dbReference>
<dbReference type="FunFam" id="1.10.10.580:FF:000001">
    <property type="entry name" value="double-strand-break repair protein rad21 homolog"/>
    <property type="match status" value="1"/>
</dbReference>
<dbReference type="Gene3D" id="1.10.10.580">
    <property type="entry name" value="Structural maintenance of chromosome 1. Chain E"/>
    <property type="match status" value="1"/>
</dbReference>
<dbReference type="InterPro" id="IPR049589">
    <property type="entry name" value="NXP1_M-like"/>
</dbReference>
<dbReference type="InterPro" id="IPR039781">
    <property type="entry name" value="Rad21/Rec8-like"/>
</dbReference>
<dbReference type="InterPro" id="IPR006909">
    <property type="entry name" value="Rad21/Rec8_C_eu"/>
</dbReference>
<dbReference type="InterPro" id="IPR006910">
    <property type="entry name" value="Rad21_Rec8_N"/>
</dbReference>
<dbReference type="InterPro" id="IPR023093">
    <property type="entry name" value="ScpA-like_C"/>
</dbReference>
<dbReference type="InterPro" id="IPR036390">
    <property type="entry name" value="WH_DNA-bd_sf"/>
</dbReference>
<dbReference type="PANTHER" id="PTHR12585:SF20">
    <property type="entry name" value="DOUBLE-STRAND-BREAK REPAIR PROTEIN RAD21 HOMOLOG"/>
    <property type="match status" value="1"/>
</dbReference>
<dbReference type="PANTHER" id="PTHR12585">
    <property type="entry name" value="SCC1 / RAD21 FAMILY MEMBER"/>
    <property type="match status" value="1"/>
</dbReference>
<dbReference type="Pfam" id="PF04824">
    <property type="entry name" value="Rad21_Rec8"/>
    <property type="match status" value="1"/>
</dbReference>
<dbReference type="Pfam" id="PF04825">
    <property type="entry name" value="Rad21_Rec8_N"/>
    <property type="match status" value="1"/>
</dbReference>
<dbReference type="SUPFAM" id="SSF46785">
    <property type="entry name" value="Winged helix' DNA-binding domain"/>
    <property type="match status" value="1"/>
</dbReference>
<gene>
    <name type="primary">RAD21</name>
    <name type="synonym">SCC1</name>
</gene>
<comment type="function">
    <molecule>Double-strand-break repair protein rad21 homolog</molecule>
    <text evidence="2 5 6">As a member of the cohesin complex, involved in sister chromatid cohesion from the time of DNA replication in S phase to their segregation in mitosis, a function that is essential for proper chromosome segregation, post-replicative DNA repair, and the prevention of inappropriate recombination between repetitive regions. The cohesin complex may also play a role in spindle pole assembly during mitosis (By similarity). In interphase, cohesins may function in the control of gene expression by binding to numerous sites within the genome (By similarity). May control RUNX1 gene expression. Binds to and represses APOB gene promoter (By similarity). May play a role in embryonic gut development, possibly through the regulation of enteric neuron development (By similarity).</text>
</comment>
<comment type="function">
    <molecule>64-kDa C-terminal product</molecule>
    <text evidence="2">May promote apoptosis.</text>
</comment>
<comment type="subunit">
    <text evidence="2">Component of the cohesin complex, which consists of an SMC1A/B and SMC3 heterodimer core and 2 non-Smc subunits RAD21 and STAG1/SA1, STAG2/SA2 or STAG3/SA3. Interacts (via C-terminus) with SMC1A and (via N-terminus) with SMC3; these interactions are direct (By similarity). The cohesin complex interacts with NUMA1. The cohesin complex also interacts with CDCA5, PDS5A and PDS5B; this interaction might regulate the ability of the cohesin complex to mediate sister chromatid cohesion. The interaction with PDS5B is direct and is stimulated by STAG1/SA1. The cohesin complex interacts with the cohesin loading complex subunits NIPBL/Scc2 (via HEAT repeats) and MAU2/Scc4. NIPBL directly contacts all members of the complex, RAD21, SMC1A/B, SMC3 and STAG1. The cohesin complex interacts with DDX11/ChIR1. Directly interacts with WAPL; this interaction is stimulated by STAG1/SA1. Interacts with the ISWI chromatin remodeling complex component SMARCA5; the interaction is direct (By similarity). Interacts with the NuRD complex component CHD4; the interaction is direct (By similarity).</text>
</comment>
<comment type="subcellular location">
    <molecule>Double-strand-break repair protein rad21 homolog</molecule>
    <subcellularLocation>
        <location evidence="2">Nucleus</location>
    </subcellularLocation>
    <subcellularLocation>
        <location evidence="2">Nucleus matrix</location>
    </subcellularLocation>
    <subcellularLocation>
        <location evidence="2">Chromosome</location>
    </subcellularLocation>
    <subcellularLocation>
        <location evidence="2">Chromosome</location>
        <location evidence="2">Centromere</location>
    </subcellularLocation>
    <subcellularLocation>
        <location evidence="2">Cytoplasm</location>
        <location evidence="2">Cytoskeleton</location>
        <location evidence="2">Spindle pole</location>
    </subcellularLocation>
    <text evidence="2 3">Associates with chromatin. Before prophase, scattered along chromosome arms. During prophase and prometaphase, most cohesins dissociate from the arms of condensing chromosome, possibly through PLK1-mediated phosphorylation (By similarity). A small amount of cohesin remains in centromeric regions and is removed from chromosomes only at the onset of anaphase. At anaphase, cleavage by separase/ESPL1 leads to the dissociation of cohesin from chromosomes and chromosome separation (By similarity).</text>
</comment>
<comment type="subcellular location">
    <molecule>64-kDa C-terminal product</molecule>
    <subcellularLocation>
        <location evidence="2">Cytoplasm</location>
        <location evidence="2">Cytosol</location>
    </subcellularLocation>
    <subcellularLocation>
        <location evidence="2">Nucleus</location>
    </subcellularLocation>
</comment>
<comment type="domain">
    <text evidence="4">The C-terminal part associates with the ATPase head of SMC1A, while the N-terminal part binds to the ATPase head of SMC3.</text>
</comment>
<comment type="PTM">
    <text evidence="2">Cleaved by separase/ESPL1 at the onset of anaphase; this cleavage is required for sister chromatid separation and cytokinesis. Cleaved by caspase-3/CASP3 or caspase-7/CASP7 at the beginning of apoptosis.</text>
</comment>
<comment type="PTM">
    <text evidence="2">Phosphorylated; becomes hyperphosphorylated in M phase of cell cycle. The large dissociation of cohesin from chromosome arms during prophase may be partly due to its phosphorylation by PLK1.</text>
</comment>
<comment type="similarity">
    <text evidence="8">Belongs to the rad21 family.</text>
</comment>
<evidence type="ECO:0000250" key="1"/>
<evidence type="ECO:0000250" key="2">
    <source>
        <dbReference type="UniProtKB" id="O60216"/>
    </source>
</evidence>
<evidence type="ECO:0000250" key="3">
    <source>
        <dbReference type="UniProtKB" id="O93310"/>
    </source>
</evidence>
<evidence type="ECO:0000250" key="4">
    <source>
        <dbReference type="UniProtKB" id="Q12158"/>
    </source>
</evidence>
<evidence type="ECO:0000250" key="5">
    <source>
        <dbReference type="UniProtKB" id="Q61550"/>
    </source>
</evidence>
<evidence type="ECO:0000250" key="6">
    <source>
        <dbReference type="UniProtKB" id="Q6TEL1"/>
    </source>
</evidence>
<evidence type="ECO:0000256" key="7">
    <source>
        <dbReference type="SAM" id="MobiDB-lite"/>
    </source>
</evidence>
<evidence type="ECO:0000305" key="8"/>